<evidence type="ECO:0000255" key="1">
    <source>
        <dbReference type="HAMAP-Rule" id="MF_01396"/>
    </source>
</evidence>
<sequence>MDLVALKFIAIGLSVLGILGAGLGVANIFSTMLSGLARNPESEGKMKIYVYVGAGMVEFTGLLAFVLAMLLMFVA</sequence>
<proteinExistence type="inferred from homology"/>
<keyword id="KW-0066">ATP synthesis</keyword>
<keyword id="KW-1003">Cell membrane</keyword>
<keyword id="KW-0138">CF(0)</keyword>
<keyword id="KW-0375">Hydrogen ion transport</keyword>
<keyword id="KW-0406">Ion transport</keyword>
<keyword id="KW-0446">Lipid-binding</keyword>
<keyword id="KW-0472">Membrane</keyword>
<keyword id="KW-1185">Reference proteome</keyword>
<keyword id="KW-0812">Transmembrane</keyword>
<keyword id="KW-1133">Transmembrane helix</keyword>
<keyword id="KW-0813">Transport</keyword>
<feature type="chain" id="PRO_1000184536" description="ATP synthase subunit c">
    <location>
        <begin position="1"/>
        <end position="75"/>
    </location>
</feature>
<feature type="transmembrane region" description="Helical" evidence="1">
    <location>
        <begin position="8"/>
        <end position="28"/>
    </location>
</feature>
<feature type="transmembrane region" description="Helical" evidence="1">
    <location>
        <begin position="54"/>
        <end position="74"/>
    </location>
</feature>
<feature type="site" description="Reversibly protonated during proton transport" evidence="1">
    <location>
        <position position="58"/>
    </location>
</feature>
<organism>
    <name type="scientific">Wolbachia sp. subsp. Brugia malayi (strain TRS)</name>
    <dbReference type="NCBI Taxonomy" id="292805"/>
    <lineage>
        <taxon>Bacteria</taxon>
        <taxon>Pseudomonadati</taxon>
        <taxon>Pseudomonadota</taxon>
        <taxon>Alphaproteobacteria</taxon>
        <taxon>Rickettsiales</taxon>
        <taxon>Anaplasmataceae</taxon>
        <taxon>Wolbachieae</taxon>
        <taxon>Wolbachia</taxon>
    </lineage>
</organism>
<reference key="1">
    <citation type="journal article" date="2005" name="PLoS Biol.">
        <title>The Wolbachia genome of Brugia malayi: endosymbiont evolution within a human pathogenic nematode.</title>
        <authorList>
            <person name="Foster J."/>
            <person name="Ganatra M."/>
            <person name="Kamal I."/>
            <person name="Ware J."/>
            <person name="Makarova K."/>
            <person name="Ivanova N."/>
            <person name="Bhattacharyya A."/>
            <person name="Kapatral V."/>
            <person name="Kumar S."/>
            <person name="Posfai J."/>
            <person name="Vincze T."/>
            <person name="Ingram J."/>
            <person name="Moran L."/>
            <person name="Lapidus A."/>
            <person name="Omelchenko M."/>
            <person name="Kyrpides N."/>
            <person name="Ghedin E."/>
            <person name="Wang S."/>
            <person name="Goltsman E."/>
            <person name="Joukov V."/>
            <person name="Ostrovskaya O."/>
            <person name="Tsukerman K."/>
            <person name="Mazur M."/>
            <person name="Comb D."/>
            <person name="Koonin E."/>
            <person name="Slatko B."/>
        </authorList>
    </citation>
    <scope>NUCLEOTIDE SEQUENCE [LARGE SCALE GENOMIC DNA]</scope>
    <source>
        <strain>TRS</strain>
    </source>
</reference>
<comment type="function">
    <text evidence="1">F(1)F(0) ATP synthase produces ATP from ADP in the presence of a proton or sodium gradient. F-type ATPases consist of two structural domains, F(1) containing the extramembraneous catalytic core and F(0) containing the membrane proton channel, linked together by a central stalk and a peripheral stalk. During catalysis, ATP synthesis in the catalytic domain of F(1) is coupled via a rotary mechanism of the central stalk subunits to proton translocation.</text>
</comment>
<comment type="function">
    <text evidence="1">Key component of the F(0) channel; it plays a direct role in translocation across the membrane. A homomeric c-ring of between 10-14 subunits forms the central stalk rotor element with the F(1) delta and epsilon subunits.</text>
</comment>
<comment type="subunit">
    <text evidence="1">F-type ATPases have 2 components, F(1) - the catalytic core - and F(0) - the membrane proton channel. F(1) has five subunits: alpha(3), beta(3), gamma(1), delta(1), epsilon(1). F(0) has three main subunits: a(1), b(2) and c(10-14). The alpha and beta chains form an alternating ring which encloses part of the gamma chain. F(1) is attached to F(0) by a central stalk formed by the gamma and epsilon chains, while a peripheral stalk is formed by the delta and b chains.</text>
</comment>
<comment type="subcellular location">
    <subcellularLocation>
        <location evidence="1">Cell membrane</location>
        <topology evidence="1">Multi-pass membrane protein</topology>
    </subcellularLocation>
</comment>
<comment type="similarity">
    <text evidence="1">Belongs to the ATPase C chain family.</text>
</comment>
<gene>
    <name evidence="1" type="primary">atpE</name>
    <name type="ordered locus">Wbm0459</name>
</gene>
<protein>
    <recommendedName>
        <fullName evidence="1">ATP synthase subunit c</fullName>
    </recommendedName>
    <alternativeName>
        <fullName evidence="1">ATP synthase F(0) sector subunit c</fullName>
    </alternativeName>
    <alternativeName>
        <fullName evidence="1">F-type ATPase subunit c</fullName>
        <shortName evidence="1">F-ATPase subunit c</shortName>
    </alternativeName>
    <alternativeName>
        <fullName evidence="1">Lipid-binding protein</fullName>
    </alternativeName>
</protein>
<name>ATPL_WOLTR</name>
<dbReference type="EMBL" id="AE017321">
    <property type="protein sequence ID" value="AAW71047.1"/>
    <property type="molecule type" value="Genomic_DNA"/>
</dbReference>
<dbReference type="RefSeq" id="WP_011256657.1">
    <property type="nucleotide sequence ID" value="NC_006833.1"/>
</dbReference>
<dbReference type="SMR" id="Q5GSH7"/>
<dbReference type="STRING" id="292805.Wbm0459"/>
<dbReference type="KEGG" id="wbm:Wbm0459"/>
<dbReference type="eggNOG" id="COG0636">
    <property type="taxonomic scope" value="Bacteria"/>
</dbReference>
<dbReference type="HOGENOM" id="CLU_148047_4_0_5"/>
<dbReference type="Proteomes" id="UP000000534">
    <property type="component" value="Chromosome"/>
</dbReference>
<dbReference type="GO" id="GO:0005886">
    <property type="term" value="C:plasma membrane"/>
    <property type="evidence" value="ECO:0007669"/>
    <property type="project" value="UniProtKB-SubCell"/>
</dbReference>
<dbReference type="GO" id="GO:0045259">
    <property type="term" value="C:proton-transporting ATP synthase complex"/>
    <property type="evidence" value="ECO:0007669"/>
    <property type="project" value="UniProtKB-KW"/>
</dbReference>
<dbReference type="GO" id="GO:0033177">
    <property type="term" value="C:proton-transporting two-sector ATPase complex, proton-transporting domain"/>
    <property type="evidence" value="ECO:0007669"/>
    <property type="project" value="InterPro"/>
</dbReference>
<dbReference type="GO" id="GO:0008289">
    <property type="term" value="F:lipid binding"/>
    <property type="evidence" value="ECO:0007669"/>
    <property type="project" value="UniProtKB-KW"/>
</dbReference>
<dbReference type="GO" id="GO:0046933">
    <property type="term" value="F:proton-transporting ATP synthase activity, rotational mechanism"/>
    <property type="evidence" value="ECO:0007669"/>
    <property type="project" value="UniProtKB-UniRule"/>
</dbReference>
<dbReference type="CDD" id="cd18182">
    <property type="entry name" value="ATP-synt_Fo_c_ATP5G3"/>
    <property type="match status" value="1"/>
</dbReference>
<dbReference type="Gene3D" id="1.20.20.10">
    <property type="entry name" value="F1F0 ATP synthase subunit C"/>
    <property type="match status" value="1"/>
</dbReference>
<dbReference type="HAMAP" id="MF_01396">
    <property type="entry name" value="ATP_synth_c_bact"/>
    <property type="match status" value="1"/>
</dbReference>
<dbReference type="InterPro" id="IPR000454">
    <property type="entry name" value="ATP_synth_F0_csu"/>
</dbReference>
<dbReference type="InterPro" id="IPR020537">
    <property type="entry name" value="ATP_synth_F0_csu_DDCD_BS"/>
</dbReference>
<dbReference type="InterPro" id="IPR038662">
    <property type="entry name" value="ATP_synth_F0_csu_sf"/>
</dbReference>
<dbReference type="InterPro" id="IPR002379">
    <property type="entry name" value="ATPase_proteolipid_c-like_dom"/>
</dbReference>
<dbReference type="InterPro" id="IPR035921">
    <property type="entry name" value="F/V-ATP_Csub_sf"/>
</dbReference>
<dbReference type="NCBIfam" id="NF005733">
    <property type="entry name" value="PRK07558.1"/>
    <property type="match status" value="1"/>
</dbReference>
<dbReference type="PANTHER" id="PTHR10031">
    <property type="entry name" value="ATP SYNTHASE LIPID-BINDING PROTEIN, MITOCHONDRIAL"/>
    <property type="match status" value="1"/>
</dbReference>
<dbReference type="PANTHER" id="PTHR10031:SF0">
    <property type="entry name" value="ATPASE PROTEIN 9"/>
    <property type="match status" value="1"/>
</dbReference>
<dbReference type="Pfam" id="PF00137">
    <property type="entry name" value="ATP-synt_C"/>
    <property type="match status" value="1"/>
</dbReference>
<dbReference type="PRINTS" id="PR00124">
    <property type="entry name" value="ATPASEC"/>
</dbReference>
<dbReference type="SUPFAM" id="SSF81333">
    <property type="entry name" value="F1F0 ATP synthase subunit C"/>
    <property type="match status" value="1"/>
</dbReference>
<dbReference type="PROSITE" id="PS00605">
    <property type="entry name" value="ATPASE_C"/>
    <property type="match status" value="1"/>
</dbReference>
<accession>Q5GSH7</accession>